<accession>P03069</accession>
<accession>D3DLN9</accession>
<accession>P03068</accession>
<accession>Q70D88</accession>
<accession>Q70D91</accession>
<accession>Q70D96</accession>
<accession>Q70D99</accession>
<accession>Q70DA0</accession>
<accession>Q96UT3</accession>
<gene>
    <name evidence="31 34" type="primary">GCN4</name>
    <name evidence="32 34" type="synonym">AAS101</name>
    <name evidence="34" type="synonym">AAS3</name>
    <name evidence="34" type="synonym">ARG9</name>
    <name type="ordered locus">YEL009C</name>
</gene>
<proteinExistence type="evidence at protein level"/>
<evidence type="ECO:0000255" key="1">
    <source>
        <dbReference type="PROSITE-ProRule" id="PRU00978"/>
    </source>
</evidence>
<evidence type="ECO:0000256" key="2">
    <source>
        <dbReference type="SAM" id="MobiDB-lite"/>
    </source>
</evidence>
<evidence type="ECO:0000269" key="3">
    <source>
    </source>
</evidence>
<evidence type="ECO:0000269" key="4">
    <source>
    </source>
</evidence>
<evidence type="ECO:0000269" key="5">
    <source>
    </source>
</evidence>
<evidence type="ECO:0000269" key="6">
    <source>
    </source>
</evidence>
<evidence type="ECO:0000269" key="7">
    <source>
    </source>
</evidence>
<evidence type="ECO:0000269" key="8">
    <source>
    </source>
</evidence>
<evidence type="ECO:0000269" key="9">
    <source>
    </source>
</evidence>
<evidence type="ECO:0000269" key="10">
    <source>
    </source>
</evidence>
<evidence type="ECO:0000269" key="11">
    <source>
    </source>
</evidence>
<evidence type="ECO:0000269" key="12">
    <source>
    </source>
</evidence>
<evidence type="ECO:0000269" key="13">
    <source>
    </source>
</evidence>
<evidence type="ECO:0000269" key="14">
    <source>
    </source>
</evidence>
<evidence type="ECO:0000269" key="15">
    <source>
    </source>
</evidence>
<evidence type="ECO:0000269" key="16">
    <source>
    </source>
</evidence>
<evidence type="ECO:0000269" key="17">
    <source>
    </source>
</evidence>
<evidence type="ECO:0000269" key="18">
    <source>
    </source>
</evidence>
<evidence type="ECO:0000269" key="19">
    <source>
    </source>
</evidence>
<evidence type="ECO:0000269" key="20">
    <source>
    </source>
</evidence>
<evidence type="ECO:0000269" key="21">
    <source>
    </source>
</evidence>
<evidence type="ECO:0000269" key="22">
    <source>
    </source>
</evidence>
<evidence type="ECO:0000269" key="23">
    <source>
    </source>
</evidence>
<evidence type="ECO:0000269" key="24">
    <source>
    </source>
</evidence>
<evidence type="ECO:0000269" key="25">
    <source>
    </source>
</evidence>
<evidence type="ECO:0000269" key="26">
    <source>
    </source>
</evidence>
<evidence type="ECO:0000269" key="27">
    <source>
    </source>
</evidence>
<evidence type="ECO:0000269" key="28">
    <source>
    </source>
</evidence>
<evidence type="ECO:0000303" key="29">
    <source>
    </source>
</evidence>
<evidence type="ECO:0000303" key="30">
    <source>
    </source>
</evidence>
<evidence type="ECO:0000303" key="31">
    <source>
    </source>
</evidence>
<evidence type="ECO:0000303" key="32">
    <source>
    </source>
</evidence>
<evidence type="ECO:0000305" key="33"/>
<evidence type="ECO:0000312" key="34">
    <source>
        <dbReference type="SGD" id="S000000735"/>
    </source>
</evidence>
<evidence type="ECO:0007744" key="35">
    <source>
    </source>
</evidence>
<evidence type="ECO:0007829" key="36">
    <source>
        <dbReference type="PDB" id="2LPB"/>
    </source>
</evidence>
<evidence type="ECO:0007829" key="37">
    <source>
        <dbReference type="PDB" id="3AZD"/>
    </source>
</evidence>
<evidence type="ECO:0007829" key="38">
    <source>
        <dbReference type="PDB" id="5APP"/>
    </source>
</evidence>
<reference key="1">
    <citation type="journal article" date="1984" name="Proc. Natl. Acad. Sci. U.S.A.">
        <title>Evidence for translational regulation of the activator of general amino acid control in yeast.</title>
        <authorList>
            <person name="Hinnebusch A.G."/>
        </authorList>
    </citation>
    <scope>NUCLEOTIDE SEQUENCE [GENOMIC DNA]</scope>
    <scope>INDUCTION</scope>
</reference>
<reference key="2">
    <citation type="journal article" date="1984" name="Proc. Natl. Acad. Sci. U.S.A.">
        <title>5' untranslated sequences are required for the translational control of a yeast regulatory gene.</title>
        <authorList>
            <person name="Thireos G."/>
            <person name="Penn M.D."/>
            <person name="Greer H."/>
        </authorList>
    </citation>
    <scope>NUCLEOTIDE SEQUENCE [GENOMIC DNA]</scope>
    <scope>INDUCTION</scope>
</reference>
<reference key="3">
    <citation type="journal article" date="2004" name="Nucleic Acids Res.">
        <title>Differential evolution of the Saccharomyces cerevisiae DUP240 paralogs and implication of recombination in phylogeny.</title>
        <authorList>
            <person name="Leh-Louis V."/>
            <person name="Wirth B."/>
            <person name="Despons L."/>
            <person name="Wain-Hobson S."/>
            <person name="Potier S."/>
            <person name="Souciet J.-L."/>
        </authorList>
    </citation>
    <scope>NUCLEOTIDE SEQUENCE [GENOMIC DNA]</scope>
    <scope>VARIANTS PRO-24; SER-62; ALA-82; ALA-91; ALA-125 AND GLU-196</scope>
    <source>
        <strain>CLIB 219</strain>
        <strain>CLIB 382</strain>
        <strain>CLIB 388</strain>
        <strain>CLIB 410</strain>
        <strain>CLIB 413</strain>
        <strain>CLIB 556</strain>
        <strain>CLIB 630</strain>
        <strain>CLIB 95</strain>
        <strain>K1</strain>
        <strain>R12</strain>
        <strain>R13</strain>
        <strain>Sigma 1278B</strain>
        <strain>YIIc12</strain>
        <strain>YIIc17</strain>
    </source>
</reference>
<reference key="4">
    <citation type="journal article" date="1997" name="Nature">
        <title>The nucleotide sequence of Saccharomyces cerevisiae chromosome V.</title>
        <authorList>
            <person name="Dietrich F.S."/>
            <person name="Mulligan J.T."/>
            <person name="Hennessy K.M."/>
            <person name="Yelton M.A."/>
            <person name="Allen E."/>
            <person name="Araujo R."/>
            <person name="Aviles E."/>
            <person name="Berno A."/>
            <person name="Brennan T."/>
            <person name="Carpenter J."/>
            <person name="Chen E."/>
            <person name="Cherry J.M."/>
            <person name="Chung E."/>
            <person name="Duncan M."/>
            <person name="Guzman E."/>
            <person name="Hartzell G."/>
            <person name="Hunicke-Smith S."/>
            <person name="Hyman R.W."/>
            <person name="Kayser A."/>
            <person name="Komp C."/>
            <person name="Lashkari D."/>
            <person name="Lew H."/>
            <person name="Lin D."/>
            <person name="Mosedale D."/>
            <person name="Nakahara K."/>
            <person name="Namath A."/>
            <person name="Norgren R."/>
            <person name="Oefner P."/>
            <person name="Oh C."/>
            <person name="Petel F.X."/>
            <person name="Roberts D."/>
            <person name="Sehl P."/>
            <person name="Schramm S."/>
            <person name="Shogren T."/>
            <person name="Smith V."/>
            <person name="Taylor P."/>
            <person name="Wei Y."/>
            <person name="Botstein D."/>
            <person name="Davis R.W."/>
        </authorList>
    </citation>
    <scope>NUCLEOTIDE SEQUENCE [LARGE SCALE GENOMIC DNA]</scope>
    <source>
        <strain>ATCC 204508 / S288c</strain>
    </source>
</reference>
<reference key="5">
    <citation type="journal article" date="2014" name="G3 (Bethesda)">
        <title>The reference genome sequence of Saccharomyces cerevisiae: Then and now.</title>
        <authorList>
            <person name="Engel S.R."/>
            <person name="Dietrich F.S."/>
            <person name="Fisk D.G."/>
            <person name="Binkley G."/>
            <person name="Balakrishnan R."/>
            <person name="Costanzo M.C."/>
            <person name="Dwight S.S."/>
            <person name="Hitz B.C."/>
            <person name="Karra K."/>
            <person name="Nash R.S."/>
            <person name="Weng S."/>
            <person name="Wong E.D."/>
            <person name="Lloyd P."/>
            <person name="Skrzypek M.S."/>
            <person name="Miyasato S.R."/>
            <person name="Simison M."/>
            <person name="Cherry J.M."/>
        </authorList>
    </citation>
    <scope>GENOME REANNOTATION</scope>
    <source>
        <strain>ATCC 204508 / S288c</strain>
    </source>
</reference>
<reference key="6">
    <citation type="journal article" date="2002" name="Transfusion">
        <title>Construction of dimeric F(ab) useful in blood group serology.</title>
        <authorList>
            <person name="Czerwinski M."/>
            <person name="Krop-Watorek A."/>
            <person name="Lisowska E."/>
            <person name="Spitalnik S.L."/>
        </authorList>
    </citation>
    <scope>NUCLEOTIDE SEQUENCE [MRNA] OF 249-281</scope>
</reference>
<reference key="7">
    <citation type="journal article" date="1986" name="Cell">
        <title>Multiple upstream AUG codons mediate translational control of GCN4.</title>
        <authorList>
            <person name="Mueller P.P."/>
            <person name="Hinnebusch A.G."/>
        </authorList>
    </citation>
    <scope>INDUCTION</scope>
</reference>
<reference key="8">
    <citation type="journal article" date="1986" name="Cell">
        <title>Functional dissection of a eukaryotic transcriptional activator protein, GCN4 of yeast.</title>
        <authorList>
            <person name="Hope I.A."/>
            <person name="Struhl K."/>
        </authorList>
    </citation>
    <scope>FUNCTION</scope>
    <scope>DOMAINS</scope>
</reference>
<reference key="9">
    <citation type="journal article" date="1986" name="Science">
        <title>Saturation mutagenesis of the yeast his3 regulatory site: requirements for transcriptional induction and for binding by GCN4 activator protein.</title>
        <authorList>
            <person name="Hill D.E."/>
            <person name="Hope I.A."/>
            <person name="Macke J.P."/>
            <person name="Struhl K."/>
        </authorList>
    </citation>
    <scope>FUNCTION</scope>
</reference>
<reference key="10">
    <citation type="journal article" date="1987" name="EMBO J.">
        <title>GCN4, a eukaryotic transcriptional activator protein, binds as a dimer to target DNA.</title>
        <authorList>
            <person name="Hope I.A."/>
            <person name="Struhl K."/>
        </authorList>
    </citation>
    <scope>FUNCTION</scope>
    <scope>SUBUNIT</scope>
</reference>
<reference key="11">
    <citation type="journal article" date="1989" name="Genes Dev.">
        <title>Sequences that surround the stop codons of upstream open reading frames in GCN4 mRNA determine their distinct functions in translational control.</title>
        <authorList>
            <person name="Miller P.F."/>
            <person name="Hinnebusch A.G."/>
        </authorList>
    </citation>
    <scope>INDUCTION</scope>
</reference>
<reference key="12">
    <citation type="journal article" date="1990" name="Mol. Cell. Biol.">
        <title>Mutations that define the optimal half-site for binding yeast GCN4 activator protein and identify an ATF/CREB-like repressor that recognizes similar DNA sites.</title>
        <authorList>
            <person name="Sellers J.W."/>
            <person name="Vincent A.C."/>
            <person name="Struhl K."/>
        </authorList>
    </citation>
    <scope>FUNCTION</scope>
    <scope>SUBUNIT</scope>
</reference>
<reference key="13">
    <citation type="journal article" date="1990" name="Mol. Gen. Genet.">
        <title>A GCN4 protein recognition element is not sufficient for GCN4-dependent regulation of transcription in the ARO7 promoter of Saccharomyces cerevisiae.</title>
        <authorList>
            <person name="Schmidheini T."/>
            <person name="Moesch H.U."/>
            <person name="Graf R."/>
            <person name="Braus G.H."/>
        </authorList>
    </citation>
    <scope>FUNCTION</scope>
</reference>
<reference key="14">
    <citation type="journal article" date="1991" name="J. Biol. Chem.">
        <title>Transcriptional activation of yeast nucleotide biosynthetic gene ADE4 by GCN4.</title>
        <authorList>
            <person name="Moesch H.U."/>
            <person name="Scheier B."/>
            <person name="Lahti R."/>
            <person name="Maentsaela P."/>
            <person name="Braus G.H."/>
        </authorList>
    </citation>
    <scope>FUNCTION</scope>
</reference>
<reference key="15">
    <citation type="journal article" date="1991" name="Mol. Cell. Biol.">
        <title>Suppression of ribosomal reinitiation at upstream open reading frames in amino acid-starved cells forms the basis for GCN4 translational control.</title>
        <authorList>
            <person name="Abastado J.P."/>
            <person name="Miller P.F."/>
            <person name="Jackson B.M."/>
            <person name="Hinnebusch A.G."/>
        </authorList>
    </citation>
    <scope>INDUCTION</scope>
</reference>
<reference key="16">
    <citation type="journal article" date="1993" name="Mol. Cell. Biol.">
        <title>Translation of the yeast transcriptional activator GCN4 is stimulated by purine limitation: implications for activation of the protein kinase GCN2.</title>
        <authorList>
            <person name="Rolfes R.J."/>
            <person name="Hinnebusch A.G."/>
        </authorList>
    </citation>
    <scope>FUNCTION</scope>
    <scope>INDUCTION</scope>
    <scope>DISRUPTION PHENOTYPE</scope>
</reference>
<reference key="17">
    <citation type="journal article" date="1995" name="Mol. Cell. Biol.">
        <title>The transcriptional activator GCN4 contains multiple activation domains that are critically dependent on hydrophobic amino acids.</title>
        <authorList>
            <person name="Drysdale C.M."/>
            <person name="Duenas E."/>
            <person name="Jackson B.M."/>
            <person name="Reusser U."/>
            <person name="Braus G.H."/>
            <person name="Hinnebusch A.G."/>
        </authorList>
    </citation>
    <scope>FUNCTION</scope>
    <scope>DOMAINS</scope>
    <scope>MUTAGENESIS OF 97-PHE-PHE-98; MET-107; TYR-110; LEU-113 AND 120-TRP--PHE-124</scope>
</reference>
<reference key="18">
    <citation type="journal article" date="1995" name="Nat. Struct. Biol.">
        <title>Deconstruction of GCN4/GCRE into a monomeric peptide-DNA complex.</title>
        <authorList>
            <person name="Stanojevic D."/>
            <person name="Verdine G.L."/>
        </authorList>
    </citation>
    <scope>FUNCTION</scope>
    <scope>SUBUNIT</scope>
</reference>
<reference key="19">
    <citation type="journal article" date="1998" name="J. Biol. Chem.">
        <title>Monitoring the Gcn4 protein-mediated response in the yeast Saccharomyces cerevisiae.</title>
        <authorList>
            <person name="Albrecht G."/>
            <person name="Moesch H.U."/>
            <person name="Hoffmann B."/>
            <person name="Reusser U."/>
            <person name="Braus G.H."/>
        </authorList>
    </citation>
    <scope>INDUCTION</scope>
</reference>
<reference key="20">
    <citation type="journal article" date="1998" name="Mol. Cell. Biol.">
        <title>The Gcn4p activation domain interacts specifically in vitro with RNA polymerase II holoenzyme, TFIID, and the Adap-Gcn5p coactivator complex.</title>
        <authorList>
            <person name="Drysdale C.M."/>
            <person name="Jackson B.M."/>
            <person name="McVeigh R."/>
            <person name="Klebanow E.R."/>
            <person name="Bai Y."/>
            <person name="Kokubo T."/>
            <person name="Swanson M."/>
            <person name="Nakatani Y."/>
            <person name="Weil P.A."/>
            <person name="Hinnebusch A.G."/>
        </authorList>
    </citation>
    <scope>FUNCTION</scope>
    <scope>INTERACTION WITH THE MEDIATOR COMPLEX AND THE SAGA COMPLEX</scope>
</reference>
<reference key="21">
    <citation type="journal article" date="1999" name="Mol. Cell">
        <title>Transcriptional activation by Gcn4p involves independent interactions with the SWI/SNF complex and the SRB/mediator.</title>
        <authorList>
            <person name="Natarajan K."/>
            <person name="Jackson B.M."/>
            <person name="Zhou H."/>
            <person name="Winston F."/>
            <person name="Hinnebusch A.G."/>
        </authorList>
    </citation>
    <scope>FUNCTION</scope>
    <scope>INTERACTION WITH THE MEDIATOR COMPLEX; THE SAGA COMPLEX AND THE SWI/SNF COMPLEX</scope>
    <scope>DISRUPTION PHENOTYPE</scope>
</reference>
<reference key="22">
    <citation type="journal article" date="2000" name="Mol. Cell. Biol.">
        <title>Glucose limitation induces GCN4 translation by activation of Gcn2 protein kinase.</title>
        <authorList>
            <person name="Yang R."/>
            <person name="Wek S.A."/>
            <person name="Wek R.C."/>
        </authorList>
    </citation>
    <scope>FUNCTION</scope>
    <scope>INDUCTION</scope>
    <scope>DISRUPTION PHENOTYPE</scope>
</reference>
<reference key="23">
    <citation type="journal article" date="2001" name="Mol. Cell. Biol.">
        <title>Transcriptional profiling shows that Gcn4p is a master regulator of gene expression during amino acid starvation in yeast.</title>
        <authorList>
            <person name="Natarajan K."/>
            <person name="Meyer M.R."/>
            <person name="Jackson B.M."/>
            <person name="Slade D."/>
            <person name="Roberts C."/>
            <person name="Hinnebusch A.G."/>
            <person name="Marton M.J."/>
        </authorList>
    </citation>
    <scope>FUNCTION</scope>
    <scope>DISRUPTION PHENOTYPE</scope>
</reference>
<reference key="24">
    <citation type="journal article" date="2002" name="Eukaryot. Cell">
        <title>Amino acid-dependent Gcn4p stability regulation occurs exclusively in the yeast nucleus.</title>
        <authorList>
            <person name="Pries R."/>
            <person name="Boemeke K."/>
            <person name="Irniger S."/>
            <person name="Grundmann O."/>
            <person name="Braus G.H."/>
        </authorList>
    </citation>
    <scope>SUBCELLULAR LOCATION</scope>
    <source>
        <strain evidence="29">ATCC 200060 / W303</strain>
    </source>
</reference>
<reference key="25">
    <citation type="journal article" date="2002" name="Mol. Cell. Biol.">
        <title>Regulation of the transcription factor Gcn4 by Pho85 cyclin PCL5.</title>
        <authorList>
            <person name="Shemer R."/>
            <person name="Meimoun A."/>
            <person name="Holtzman T."/>
            <person name="Kornitzer D."/>
        </authorList>
    </citation>
    <scope>PHOSPHORYLATION AT THR-165</scope>
</reference>
<reference key="26">
    <citation type="journal article" date="2004" name="Mol. Genet. Genomics">
        <title>Nuclear import of yeast Gcn4p requires karyopherins Srp1p and Kap95p.</title>
        <authorList>
            <person name="Pries R."/>
            <person name="Boemeke K."/>
            <person name="Draht O."/>
            <person name="Kuenzler M."/>
            <person name="Braus G.H."/>
        </authorList>
    </citation>
    <scope>SUBCELLULAR LOCATION</scope>
    <source>
        <strain evidence="30">ATCC 200060 / W303</strain>
    </source>
</reference>
<reference key="27">
    <citation type="journal article" date="2008" name="Mol. Cell. Proteomics">
        <title>A multidimensional chromatography technology for in-depth phosphoproteome analysis.</title>
        <authorList>
            <person name="Albuquerque C.P."/>
            <person name="Smolka M.B."/>
            <person name="Payne S.H."/>
            <person name="Bafna V."/>
            <person name="Eng J."/>
            <person name="Zhou H."/>
        </authorList>
    </citation>
    <scope>PHOSPHORYLATION [LARGE SCALE ANALYSIS] AT SER-17 AND SER-218</scope>
    <scope>IDENTIFICATION BY MASS SPECTROMETRY [LARGE SCALE ANALYSIS]</scope>
</reference>
<reference key="28">
    <citation type="journal article" date="2010" name="J. Biol. Chem.">
        <title>Activator Gcn4 employs multiple segments of Med15/Gal11, including the KIX domain, to recruit mediator to target genes in vivo.</title>
        <authorList>
            <person name="Jedidi I."/>
            <person name="Zhang F."/>
            <person name="Qiu H."/>
            <person name="Stahl S.J."/>
            <person name="Palmer I."/>
            <person name="Kaufman J.D."/>
            <person name="Nadaud P.S."/>
            <person name="Mukherjee S."/>
            <person name="Wingfield P.T."/>
            <person name="Jaroniec C.P."/>
            <person name="Hinnebusch A.G."/>
        </authorList>
    </citation>
    <scope>FUNCTION</scope>
    <scope>INTERACTION WITH GAL11/MED15; THE SAGA COMPLEX AND THE SWI/SNF COMPLEX</scope>
    <scope>DISRUPTION PHENOTYPE</scope>
</reference>
<reference key="29">
    <citation type="journal article" date="2018" name="Mol. Cell">
        <title>Gcn4 Binding in Coding Regions Can Activate Internal and Canonical 5' Promoters in Yeast.</title>
        <authorList>
            <person name="Rawal Y."/>
            <person name="Chereji R.V."/>
            <person name="Valabhoju V."/>
            <person name="Qiu H."/>
            <person name="Ocampo J."/>
            <person name="Clark D.J."/>
            <person name="Hinnebusch A.G."/>
        </authorList>
    </citation>
    <scope>FUNCTION</scope>
    <scope>DISRUPTION PHENOTYPE</scope>
</reference>
<reference key="30">
    <citation type="journal article" date="1991" name="Science">
        <title>X-ray structure of the GCN4 leucine zipper, a two-stranded, parallel coiled coil.</title>
        <authorList>
            <person name="O'Shea E.K."/>
            <person name="Klemm J.D."/>
            <person name="Kim P.S."/>
            <person name="Alber T."/>
        </authorList>
    </citation>
    <scope>X-RAY CRYSTALLOGRAPHY (1.8 ANGSTROMS) OF 250-281</scope>
</reference>
<reference key="31">
    <citation type="journal article" date="1992" name="Cell">
        <title>The GCN4 basic region leucine zipper binds DNA as a dimer of uninterrupted alpha helices: crystal structure of the protein-DNA complex.</title>
        <authorList>
            <person name="Ellenberger T.E."/>
            <person name="Brandl C.J."/>
            <person name="Struhl K."/>
            <person name="Harrison S.C."/>
        </authorList>
    </citation>
    <scope>X-RAY CRYSTALLOGRAPHY (2.9 ANGSTROMS) OF 226-281 IN COMPLEX WITH DNA</scope>
    <scope>FUNCTION</scope>
    <scope>SUBUNIT</scope>
</reference>
<reference key="32">
    <citation type="journal article" date="1998" name="J. Mol. Biol.">
        <title>Crystal structure of GCN4-pIQI, a trimeric coiled coil with buried polar residues.</title>
        <authorList>
            <person name="Eckert D.M."/>
            <person name="Malashkevich V.N."/>
            <person name="Kim P.S."/>
        </authorList>
    </citation>
    <scope>X-RAY CRYSTALLOGRAPHY (1.8 ANGSTROMS) OF 249-281</scope>
</reference>
<reference key="33">
    <citation type="journal article" date="1991" name="Protein Eng.">
        <title>The solution structure of a leucine-zipper motif peptide.</title>
        <authorList>
            <person name="Saudek V."/>
            <person name="Pastore A."/>
            <person name="Morelli M.A."/>
            <person name="Frank R."/>
            <person name="Gausepohl H."/>
            <person name="Gibson T."/>
        </authorList>
    </citation>
    <scope>STRUCTURE BY NMR OF 237-281</scope>
</reference>
<feature type="chain" id="PRO_0000076490" description="General control transcription factor GCN4">
    <location>
        <begin position="1"/>
        <end position="281"/>
    </location>
</feature>
<feature type="domain" description="bZIP" evidence="1">
    <location>
        <begin position="225"/>
        <end position="281"/>
    </location>
</feature>
<feature type="region of interest" description="Required for transcriptional activation" evidence="25">
    <location>
        <begin position="89"/>
        <end position="100"/>
    </location>
</feature>
<feature type="region of interest" description="Required for transcriptional activation" evidence="25">
    <location>
        <begin position="106"/>
        <end position="125"/>
    </location>
</feature>
<feature type="region of interest" description="Disordered" evidence="2">
    <location>
        <begin position="217"/>
        <end position="248"/>
    </location>
</feature>
<feature type="region of interest" description="Basic motif" evidence="1 9">
    <location>
        <begin position="231"/>
        <end position="251"/>
    </location>
</feature>
<feature type="region of interest" description="Leucine-zipper" evidence="1 9">
    <location>
        <begin position="253"/>
        <end position="274"/>
    </location>
</feature>
<feature type="short sequence motif" description="Nuclear localization signal" evidence="7">
    <location>
        <begin position="167"/>
        <end position="200"/>
    </location>
</feature>
<feature type="short sequence motif" description="Nuclear localization signal" evidence="7">
    <location>
        <begin position="231"/>
        <end position="249"/>
    </location>
</feature>
<feature type="modified residue" description="Phosphoserine" evidence="35">
    <location>
        <position position="17"/>
    </location>
</feature>
<feature type="modified residue" description="Phosphothreonine; by PHO85" evidence="6">
    <location>
        <position position="165"/>
    </location>
</feature>
<feature type="modified residue" description="Phosphoserine" evidence="35">
    <location>
        <position position="218"/>
    </location>
</feature>
<feature type="sequence variant" description="In strain: CLIB 219." evidence="10">
    <original>S</original>
    <variation>P</variation>
    <location>
        <position position="24"/>
    </location>
</feature>
<feature type="sequence variant" description="In strain: CLIB 630 haplotype Ha2." evidence="10">
    <original>P</original>
    <variation>S</variation>
    <location>
        <position position="62"/>
    </location>
</feature>
<feature type="sequence variant" description="In strain: CLIB 556 haplotype Ha1." evidence="10">
    <original>T</original>
    <variation>A</variation>
    <location>
        <position position="82"/>
    </location>
</feature>
<feature type="sequence variant" description="In strain: CLIB 95, CLIB 219, CLIB 382, CLIB 388, CLIB 410, CLIB 413, CLIB 556, CLIB 630, K1, R12, R13 haplotype Ha2, Sigma 1278B haplotype Ha1, YIIc12 and YIIc17." evidence="10">
    <original>D</original>
    <variation>A</variation>
    <location>
        <position position="91"/>
    </location>
</feature>
<feature type="sequence variant" description="In strain: CLIB 556 haplotype Ha1." evidence="10">
    <original>D</original>
    <variation>A</variation>
    <location>
        <position position="125"/>
    </location>
</feature>
<feature type="sequence variant" description="In strain: CLIB 388, CLIB 410, CLIB 413, CLIB 630 haplotype Ha1, K1, YIIc12 haplotype Ha2 and YIIc17 haplotype Ha1." evidence="10">
    <original>D</original>
    <variation>E</variation>
    <location>
        <position position="196"/>
    </location>
</feature>
<feature type="mutagenesis site" description="Reduces transcriptional activation activity; when associated with A-107; A-110; A-113; A-120; A-123 and A-124." evidence="25">
    <original>FF</original>
    <variation>AA</variation>
    <location>
        <begin position="97"/>
        <end position="98"/>
    </location>
</feature>
<feature type="mutagenesis site" description="Reduces transcriptional activation activity; when associated with A-97; A-98; A-110; A-113; A-120; A-123 and A-124." evidence="25">
    <original>M</original>
    <variation>A</variation>
    <location>
        <position position="107"/>
    </location>
</feature>
<feature type="mutagenesis site" description="Reduces transcriptional activation activity; when associated with A-97; A-98; A-107; A-113; A-120; A-123 and A-124." evidence="25">
    <original>Y</original>
    <variation>A</variation>
    <location>
        <position position="110"/>
    </location>
</feature>
<feature type="mutagenesis site" description="Reduces transcriptional activation activity; when associated with A-97; A-98; A-107; A-110; A-120; A-123 and A-124." evidence="25">
    <original>L</original>
    <variation>A</variation>
    <location>
        <position position="113"/>
    </location>
</feature>
<feature type="mutagenesis site" description="Reduces transcriptional activation activity; when associated with A-97; A-98; A-107; A-110 and A-113." evidence="25">
    <original>WTSLF</original>
    <variation>ATSAA</variation>
    <location>
        <begin position="120"/>
        <end position="124"/>
    </location>
</feature>
<feature type="sequence conflict" description="In Ref. 2; AAA65521." evidence="33" ref="2">
    <original>ARRSRARKLQRMKQLEDKVEELLSKNYHLENEVARLKKLVGER</original>
    <variation>PGVLVRESCKE</variation>
    <location>
        <begin position="239"/>
        <end position="281"/>
    </location>
</feature>
<feature type="helix" evidence="36">
    <location>
        <begin position="118"/>
        <end position="121"/>
    </location>
</feature>
<feature type="helix" evidence="36">
    <location>
        <begin position="122"/>
        <end position="124"/>
    </location>
</feature>
<feature type="helix" evidence="38">
    <location>
        <begin position="206"/>
        <end position="211"/>
    </location>
</feature>
<feature type="helix" evidence="38">
    <location>
        <begin position="217"/>
        <end position="239"/>
    </location>
</feature>
<feature type="helix" evidence="37">
    <location>
        <begin position="251"/>
        <end position="263"/>
    </location>
</feature>
<feature type="turn" evidence="37">
    <location>
        <begin position="264"/>
        <end position="267"/>
    </location>
</feature>
<feature type="helix" evidence="37">
    <location>
        <begin position="268"/>
        <end position="275"/>
    </location>
</feature>
<feature type="turn" evidence="37">
    <location>
        <begin position="276"/>
        <end position="278"/>
    </location>
</feature>
<name>GCN4_YEAST</name>
<sequence length="281" mass="31310">MSEYQPSLFALNPMGFSPLDGSKSTNENVSASTSTAKPMVGQLIFDKFIKTEEDPIIKQDTPSNLDFDFALPQTATAPDAKTVLPIPELDDAVVESFFSSSTDSTPMFEYENLEDNSKEWTSLFDNDIPVTTDDVSLADKAIESTEEVSLVPSNLEVSTTSFLPTPVLEDAKLTQTRKVKKPNSVVKKSHHVGKDDESRLDHLGVVAYNRKQRSIPLSPIVPESSDPAALKRARNTEAARRSRARKLQRMKQLEDKVEELLSKNYHLENEVARLKKLVGER</sequence>
<comment type="function">
    <text evidence="3 4 5 9 11 13 14 15 17 19 20 21 24 25 26 27">Master transcriptional regulator that mediates the response to amino acid starvation (PubMed:11390663, PubMed:29628310). Binds variations of the DNA sequence 5'-ATGA[CG]TCAT-3' in canonical nucleosome-depleted 5'-positioned promoters, and also within coding sequences and 3' non-coding regions (PubMed:11390663, PubMed:1473154, PubMed:1939099, PubMed:2204805, PubMed:2277632, PubMed:29628310, PubMed:3530496, PubMed:3532321, PubMed:3678204, PubMed:7664107). During nutrient starvation (low or poor amino acid, carbon or purine sources), it activates genes required for amino acid biosynthesis and transport, autophagy, cofactor biosynthesis and transport, mitochondrial transport, and additional downstream transcription factors (PubMed:10733573, PubMed:11390663, PubMed:1939099, PubMed:29628310, PubMed:7862116, PubMed:8336737). Activates transcription by recruiting multiple coactivators, including the mediator complex, the SAGA complex, and the SWI/SNF complex, to enable assembly of the pre-initiation complex at core promoters (PubMed:10549298, PubMed:19940160, PubMed:9488488).</text>
</comment>
<comment type="subunit">
    <text evidence="3 9 13 14 21 24 27">Homodimer (PubMed:1473154, PubMed:3678204). Each subunit binds overlapping and non-identical half-sites that flank the central CG base-pair in the pseudo-palindromic motif 5'-ATGA[CG]TCAT-3' (PubMed:1473154, PubMed:2204805, PubMed:3678204, PubMed:7664107). Interacts with the mediator tail; the interaction with GAL11/MED15 is direct (PubMed:10549298, PubMed:19940160, PubMed:9488488). Interacts with the SAGA histone acetyltransferase complex (PubMed:10549298, PubMed:19940160, PubMed:9488488). Interacts with the SWI/SNF chromatin remodeling complex (PubMed:10549298, PubMed:19940160).</text>
</comment>
<comment type="interaction">
    <interactant intactId="EBI-7450">
        <id>P03069</id>
    </interactant>
    <interactant intactId="EBI-7450">
        <id>P03069</id>
        <label>GCN4</label>
    </interactant>
    <organismsDiffer>false</organismsDiffer>
    <experiments>15</experiments>
</comment>
<comment type="interaction">
    <interactant intactId="EBI-7450">
        <id>P03069</id>
    </interactant>
    <interactant intactId="EBI-14821">
        <id>P11938</id>
        <label>RAP1</label>
    </interactant>
    <organismsDiffer>false</organismsDiffer>
    <experiments>5</experiments>
</comment>
<comment type="subcellular location">
    <subcellularLocation>
        <location evidence="7 8">Nucleus</location>
    </subcellularLocation>
    <text evidence="7">Localizes to the nucleus independently of cellular amino acid levels.</text>
</comment>
<comment type="induction">
    <text evidence="4 12 16 18 22 23 26 28">Translation is induced by amino acid or purine starvation, or during growth in low or poor carbon sources (PubMed:10733573, PubMed:6387704, PubMed:6433345, PubMed:8336737, PubMed:9582292). Translational repression during nutrient-rich conditions is dependent on four uORFs (upstream open reading frames) present in the 5'-UTR of the mRNA; these promote ribosome dissociation (PubMed:2676723, PubMed:3516411, PubMed:6387704, PubMed:6433345, PubMed:8336737, PubMed:9582292). Translational induction occurs in conditions reducing translation machinery efficiency, leading to ribosomes scanning over the uORFs, and increased translation of the mRNA (PubMed:1986242). The rapid translational induction is followed by transcriptional induction at later time-points, independently of the uORF sequences (PubMed:9582292).</text>
</comment>
<comment type="domain">
    <text evidence="19 25">Residues 89 to 100 and 106 to 125 define the N-terminal activation domain (NTAD) and the central acidic activation domain (CAAD) respectively, which can function independently to promote high-level transcription of the target genes.</text>
</comment>
<comment type="PTM">
    <text evidence="6">Phosphorylated by the cyclin-CDK PCL5-PHO85. Phosphorylation of Thr-165 induces degradation of GCN4 by the E3 ubiquitin ligase complex SCF(Cdc4).</text>
</comment>
<comment type="disruption phenotype">
    <text evidence="3 4 5 13 17 26">Abolishes recruitment of the mediator complex to the upstream activating sequence (UAS) of amino-acid starvation responsive genes (PubMed:19940160). Decreases RNA level of genes involved in amino acid biosynthesis and cofactor biosynthesis during amino acid starvation or methyl methanesulfonate stress (PubMed:11390663, PubMed:29628310, PubMed:8336737). Growth dependent on amino acid supplementation (PubMed:10733573). Sensitive to amino acid starvation (PubMed:10549298). Sensitive to purine starvation (PubMed:8336737). Decreases cellular glycogen levels during glucose starvation (PubMed:10733573).</text>
</comment>
<comment type="similarity">
    <text evidence="33">Belongs to the bZIP family. GCN4 subfamily.</text>
</comment>
<organism>
    <name type="scientific">Saccharomyces cerevisiae (strain ATCC 204508 / S288c)</name>
    <name type="common">Baker's yeast</name>
    <dbReference type="NCBI Taxonomy" id="559292"/>
    <lineage>
        <taxon>Eukaryota</taxon>
        <taxon>Fungi</taxon>
        <taxon>Dikarya</taxon>
        <taxon>Ascomycota</taxon>
        <taxon>Saccharomycotina</taxon>
        <taxon>Saccharomycetes</taxon>
        <taxon>Saccharomycetales</taxon>
        <taxon>Saccharomycetaceae</taxon>
        <taxon>Saccharomyces</taxon>
    </lineage>
</organism>
<dbReference type="EMBL" id="K02205">
    <property type="protein sequence ID" value="AAA34640.1"/>
    <property type="molecule type" value="Genomic_DNA"/>
</dbReference>
<dbReference type="EMBL" id="K02649">
    <property type="protein sequence ID" value="AAA65521.1"/>
    <property type="molecule type" value="Genomic_DNA"/>
</dbReference>
<dbReference type="EMBL" id="AJ585686">
    <property type="protein sequence ID" value="CAE52206.1"/>
    <property type="molecule type" value="Genomic_DNA"/>
</dbReference>
<dbReference type="EMBL" id="AJ585687">
    <property type="protein sequence ID" value="CAE52207.1"/>
    <property type="molecule type" value="Genomic_DNA"/>
</dbReference>
<dbReference type="EMBL" id="AJ585688">
    <property type="protein sequence ID" value="CAE52208.1"/>
    <property type="molecule type" value="Genomic_DNA"/>
</dbReference>
<dbReference type="EMBL" id="AJ585689">
    <property type="protein sequence ID" value="CAE52209.1"/>
    <property type="molecule type" value="Genomic_DNA"/>
</dbReference>
<dbReference type="EMBL" id="AJ585690">
    <property type="protein sequence ID" value="CAE52210.1"/>
    <property type="molecule type" value="Genomic_DNA"/>
</dbReference>
<dbReference type="EMBL" id="AJ585691">
    <property type="protein sequence ID" value="CAE52211.1"/>
    <property type="molecule type" value="Genomic_DNA"/>
</dbReference>
<dbReference type="EMBL" id="AJ585692">
    <property type="protein sequence ID" value="CAE52212.1"/>
    <property type="molecule type" value="Genomic_DNA"/>
</dbReference>
<dbReference type="EMBL" id="AJ585693">
    <property type="protein sequence ID" value="CAE52213.1"/>
    <property type="molecule type" value="Genomic_DNA"/>
</dbReference>
<dbReference type="EMBL" id="AJ585694">
    <property type="protein sequence ID" value="CAE52214.1"/>
    <property type="molecule type" value="Genomic_DNA"/>
</dbReference>
<dbReference type="EMBL" id="AJ585695">
    <property type="protein sequence ID" value="CAE52215.1"/>
    <property type="molecule type" value="Genomic_DNA"/>
</dbReference>
<dbReference type="EMBL" id="AJ585696">
    <property type="protein sequence ID" value="CAE52216.1"/>
    <property type="molecule type" value="Genomic_DNA"/>
</dbReference>
<dbReference type="EMBL" id="AJ585697">
    <property type="protein sequence ID" value="CAE52217.1"/>
    <property type="molecule type" value="Genomic_DNA"/>
</dbReference>
<dbReference type="EMBL" id="AJ585698">
    <property type="protein sequence ID" value="CAE52218.1"/>
    <property type="molecule type" value="Genomic_DNA"/>
</dbReference>
<dbReference type="EMBL" id="AJ585699">
    <property type="protein sequence ID" value="CAE52219.1"/>
    <property type="molecule type" value="Genomic_DNA"/>
</dbReference>
<dbReference type="EMBL" id="AJ585700">
    <property type="protein sequence ID" value="CAE52220.1"/>
    <property type="molecule type" value="Genomic_DNA"/>
</dbReference>
<dbReference type="EMBL" id="AJ585701">
    <property type="protein sequence ID" value="CAE52221.1"/>
    <property type="molecule type" value="Genomic_DNA"/>
</dbReference>
<dbReference type="EMBL" id="AJ585702">
    <property type="protein sequence ID" value="CAE52222.1"/>
    <property type="molecule type" value="Genomic_DNA"/>
</dbReference>
<dbReference type="EMBL" id="AJ585703">
    <property type="protein sequence ID" value="CAE52223.1"/>
    <property type="molecule type" value="Genomic_DNA"/>
</dbReference>
<dbReference type="EMBL" id="AJ585704">
    <property type="protein sequence ID" value="CAE52224.1"/>
    <property type="molecule type" value="Genomic_DNA"/>
</dbReference>
<dbReference type="EMBL" id="AF416613">
    <property type="protein sequence ID" value="AAL09032.1"/>
    <property type="molecule type" value="mRNA"/>
</dbReference>
<dbReference type="EMBL" id="U18530">
    <property type="protein sequence ID" value="AAB64486.1"/>
    <property type="molecule type" value="Genomic_DNA"/>
</dbReference>
<dbReference type="EMBL" id="BK006939">
    <property type="protein sequence ID" value="DAA07643.1"/>
    <property type="molecule type" value="Genomic_DNA"/>
</dbReference>
<dbReference type="PIR" id="A03605">
    <property type="entry name" value="RGBYA2"/>
</dbReference>
<dbReference type="RefSeq" id="NP_010907.3">
    <property type="nucleotide sequence ID" value="NM_001178824.3"/>
</dbReference>
<dbReference type="PDB" id="1CE9">
    <property type="method" value="X-ray"/>
    <property type="resolution" value="1.80 A"/>
    <property type="chains" value="A/B/C/D=251-281"/>
</dbReference>
<dbReference type="PDB" id="1DGC">
    <property type="method" value="X-ray"/>
    <property type="resolution" value="3.00 A"/>
    <property type="chains" value="A=220-281"/>
</dbReference>
<dbReference type="PDB" id="1ENV">
    <property type="method" value="X-ray"/>
    <property type="resolution" value="2.60 A"/>
    <property type="chains" value="A=252-280"/>
</dbReference>
<dbReference type="PDB" id="1FAV">
    <property type="method" value="X-ray"/>
    <property type="resolution" value="3.00 A"/>
    <property type="chains" value="A=252-280"/>
</dbReference>
<dbReference type="PDB" id="1FMH">
    <property type="method" value="NMR"/>
    <property type="chains" value="A/B=249-279"/>
</dbReference>
<dbReference type="PDB" id="1GCL">
    <property type="method" value="X-ray"/>
    <property type="resolution" value="2.10 A"/>
    <property type="chains" value="A/B/C/D=249-281"/>
</dbReference>
<dbReference type="PDB" id="1GCM">
    <property type="method" value="X-ray"/>
    <property type="resolution" value="1.80 A"/>
    <property type="chains" value="A/B/C=249-281"/>
</dbReference>
<dbReference type="PDB" id="1GK6">
    <property type="method" value="X-ray"/>
    <property type="resolution" value="1.90 A"/>
    <property type="chains" value="A/B=249-279"/>
</dbReference>
<dbReference type="PDB" id="1GZL">
    <property type="method" value="X-ray"/>
    <property type="resolution" value="1.80 A"/>
    <property type="chains" value="A/B=249-276"/>
</dbReference>
<dbReference type="PDB" id="1IHQ">
    <property type="method" value="NMR"/>
    <property type="chains" value="A/B=264-281"/>
</dbReference>
<dbReference type="PDB" id="1IJ0">
    <property type="method" value="X-ray"/>
    <property type="resolution" value="1.86 A"/>
    <property type="chains" value="A/B/C=249-281"/>
</dbReference>
<dbReference type="PDB" id="1IJ1">
    <property type="method" value="X-ray"/>
    <property type="resolution" value="1.86 A"/>
    <property type="chains" value="A/B/C=249-281"/>
</dbReference>
<dbReference type="PDB" id="1IJ2">
    <property type="method" value="X-ray"/>
    <property type="resolution" value="1.70 A"/>
    <property type="chains" value="A/B/C=249-281"/>
</dbReference>
<dbReference type="PDB" id="1IJ3">
    <property type="method" value="X-ray"/>
    <property type="resolution" value="1.80 A"/>
    <property type="chains" value="A/B/C=249-281"/>
</dbReference>
<dbReference type="PDB" id="1KQL">
    <property type="method" value="X-ray"/>
    <property type="resolution" value="2.70 A"/>
    <property type="chains" value="A/B=255-278"/>
</dbReference>
<dbReference type="PDB" id="1LD4">
    <property type="method" value="EM"/>
    <property type="resolution" value="11.40 A"/>
    <property type="chains" value="E/F/G/H/I/J/K/L=225-281"/>
</dbReference>
<dbReference type="PDB" id="1LLM">
    <property type="method" value="X-ray"/>
    <property type="resolution" value="1.50 A"/>
    <property type="chains" value="C/D=253-281"/>
</dbReference>
<dbReference type="PDB" id="1NKN">
    <property type="method" value="X-ray"/>
    <property type="resolution" value="2.50 A"/>
    <property type="chains" value="A/B/C/D=250-281"/>
</dbReference>
<dbReference type="PDB" id="1PIQ">
    <property type="method" value="X-ray"/>
    <property type="resolution" value="1.80 A"/>
    <property type="chains" value="A=249-279"/>
</dbReference>
<dbReference type="PDB" id="1RB4">
    <property type="method" value="X-ray"/>
    <property type="resolution" value="1.90 A"/>
    <property type="chains" value="A/B/C=249-281"/>
</dbReference>
<dbReference type="PDB" id="1RB5">
    <property type="method" value="X-ray"/>
    <property type="resolution" value="1.90 A"/>
    <property type="chains" value="A/B/C=249-281"/>
</dbReference>
<dbReference type="PDB" id="1RB6">
    <property type="method" value="X-ray"/>
    <property type="resolution" value="1.90 A"/>
    <property type="chains" value="A/B/C=249-281"/>
</dbReference>
<dbReference type="PDB" id="1SWI">
    <property type="method" value="X-ray"/>
    <property type="resolution" value="2.60 A"/>
    <property type="chains" value="A/B/C=249-281"/>
</dbReference>
<dbReference type="PDB" id="1TMZ">
    <property type="method" value="NMR"/>
    <property type="chains" value="A/B=264-281"/>
</dbReference>
<dbReference type="PDB" id="1UNT">
    <property type="method" value="X-ray"/>
    <property type="resolution" value="2.07 A"/>
    <property type="chains" value="A/B=249-281"/>
</dbReference>
<dbReference type="PDB" id="1UNU">
    <property type="method" value="X-ray"/>
    <property type="resolution" value="2.07 A"/>
    <property type="chains" value="A/B=249-281"/>
</dbReference>
<dbReference type="PDB" id="1UNV">
    <property type="method" value="X-ray"/>
    <property type="resolution" value="2.14 A"/>
    <property type="chains" value="A/B=249-281"/>
</dbReference>
<dbReference type="PDB" id="1UNW">
    <property type="method" value="X-ray"/>
    <property type="resolution" value="2.20 A"/>
    <property type="chains" value="A/B=249-281"/>
</dbReference>
<dbReference type="PDB" id="1UNX">
    <property type="method" value="X-ray"/>
    <property type="resolution" value="2.40 A"/>
    <property type="chains" value="A/B=249-281"/>
</dbReference>
<dbReference type="PDB" id="1UNY">
    <property type="method" value="X-ray"/>
    <property type="resolution" value="2.30 A"/>
    <property type="chains" value="A/B=249-281"/>
</dbReference>
<dbReference type="PDB" id="1UNZ">
    <property type="method" value="X-ray"/>
    <property type="resolution" value="2.30 A"/>
    <property type="chains" value="A/B=249-281"/>
</dbReference>
<dbReference type="PDB" id="1UO0">
    <property type="method" value="X-ray"/>
    <property type="resolution" value="2.40 A"/>
    <property type="chains" value="A/B=249-281"/>
</dbReference>
<dbReference type="PDB" id="1UO1">
    <property type="method" value="X-ray"/>
    <property type="resolution" value="2.50 A"/>
    <property type="chains" value="A/B=249-281"/>
</dbReference>
<dbReference type="PDB" id="1UO2">
    <property type="method" value="X-ray"/>
    <property type="resolution" value="1.99 A"/>
    <property type="chains" value="A/B=249-281"/>
</dbReference>
<dbReference type="PDB" id="1UO3">
    <property type="method" value="X-ray"/>
    <property type="resolution" value="1.92 A"/>
    <property type="chains" value="A/B=249-281"/>
</dbReference>
<dbReference type="PDB" id="1UO4">
    <property type="method" value="X-ray"/>
    <property type="resolution" value="1.70 A"/>
    <property type="chains" value="A/B=249-281"/>
</dbReference>
<dbReference type="PDB" id="1UO5">
    <property type="method" value="X-ray"/>
    <property type="resolution" value="2.07 A"/>
    <property type="chains" value="A/B=249-281"/>
</dbReference>
<dbReference type="PDB" id="1W5G">
    <property type="method" value="X-ray"/>
    <property type="resolution" value="2.16 A"/>
    <property type="chains" value="A/B=249-281"/>
</dbReference>
<dbReference type="PDB" id="1W5H">
    <property type="method" value="X-ray"/>
    <property type="resolution" value="2.50 A"/>
    <property type="chains" value="A/B=249-281"/>
</dbReference>
<dbReference type="PDB" id="1W5I">
    <property type="method" value="X-ray"/>
    <property type="resolution" value="2.30 A"/>
    <property type="chains" value="A/B=249-281"/>
</dbReference>
<dbReference type="PDB" id="1W5J">
    <property type="method" value="X-ray"/>
    <property type="resolution" value="2.20 A"/>
    <property type="chains" value="A/B/C/D=249-281"/>
</dbReference>
<dbReference type="PDB" id="1W5K">
    <property type="method" value="X-ray"/>
    <property type="resolution" value="1.92 A"/>
    <property type="chains" value="A/B/C/D=249-281"/>
</dbReference>
<dbReference type="PDB" id="1W5L">
    <property type="method" value="X-ray"/>
    <property type="resolution" value="2.17 A"/>
    <property type="chains" value="A/B=249-281"/>
</dbReference>
<dbReference type="PDB" id="1YSA">
    <property type="method" value="X-ray"/>
    <property type="resolution" value="2.90 A"/>
    <property type="chains" value="C/D=226-281"/>
</dbReference>
<dbReference type="PDB" id="1ZII">
    <property type="method" value="X-ray"/>
    <property type="resolution" value="1.80 A"/>
    <property type="chains" value="A/B=249-281"/>
</dbReference>
<dbReference type="PDB" id="1ZIJ">
    <property type="method" value="X-ray"/>
    <property type="resolution" value="2.00 A"/>
    <property type="chains" value="A/B/C=249-281"/>
</dbReference>
<dbReference type="PDB" id="1ZIK">
    <property type="method" value="X-ray"/>
    <property type="resolution" value="1.80 A"/>
    <property type="chains" value="A/B=249-281"/>
</dbReference>
<dbReference type="PDB" id="1ZIL">
    <property type="method" value="X-ray"/>
    <property type="resolution" value="2.25 A"/>
    <property type="chains" value="A/B=249-281"/>
</dbReference>
<dbReference type="PDB" id="1ZIM">
    <property type="method" value="X-ray"/>
    <property type="resolution" value="2.00 A"/>
    <property type="chains" value="A/B/C=249-281"/>
</dbReference>
<dbReference type="PDB" id="1ZTA">
    <property type="method" value="NMR"/>
    <property type="chains" value="A=247-281"/>
</dbReference>
<dbReference type="PDB" id="2AHP">
    <property type="method" value="X-ray"/>
    <property type="resolution" value="2.00 A"/>
    <property type="chains" value="A/B=249-281"/>
</dbReference>
<dbReference type="PDB" id="2B1F">
    <property type="method" value="X-ray"/>
    <property type="resolution" value="1.50 A"/>
    <property type="chains" value="A/B/C/D=251-281"/>
</dbReference>
<dbReference type="PDB" id="2B22">
    <property type="method" value="X-ray"/>
    <property type="resolution" value="2.00 A"/>
    <property type="chains" value="A=251-281"/>
</dbReference>
<dbReference type="PDB" id="2BNI">
    <property type="method" value="X-ray"/>
    <property type="resolution" value="1.50 A"/>
    <property type="chains" value="A/B/C/D=249-281"/>
</dbReference>
<dbReference type="PDB" id="2CCE">
    <property type="method" value="X-ray"/>
    <property type="resolution" value="1.90 A"/>
    <property type="chains" value="A/B=249-281"/>
</dbReference>
<dbReference type="PDB" id="2CCF">
    <property type="method" value="X-ray"/>
    <property type="resolution" value="1.70 A"/>
    <property type="chains" value="A/B=249-281"/>
</dbReference>
<dbReference type="PDB" id="2CCN">
    <property type="method" value="X-ray"/>
    <property type="resolution" value="1.60 A"/>
    <property type="chains" value="A/B=249-281"/>
</dbReference>
<dbReference type="PDB" id="2D3E">
    <property type="method" value="X-ray"/>
    <property type="resolution" value="2.60 A"/>
    <property type="chains" value="A/B/C/D=254-277"/>
</dbReference>
<dbReference type="PDB" id="2DGC">
    <property type="method" value="X-ray"/>
    <property type="resolution" value="2.20 A"/>
    <property type="chains" value="A=220-281"/>
</dbReference>
<dbReference type="PDB" id="2EFR">
    <property type="method" value="X-ray"/>
    <property type="resolution" value="1.80 A"/>
    <property type="chains" value="A/B/C/D=249-277"/>
</dbReference>
<dbReference type="PDB" id="2EFS">
    <property type="method" value="X-ray"/>
    <property type="resolution" value="2.00 A"/>
    <property type="chains" value="A/B/C/D=249-277"/>
</dbReference>
<dbReference type="PDB" id="2G9J">
    <property type="method" value="NMR"/>
    <property type="chains" value="A/B=264-281"/>
</dbReference>
<dbReference type="PDB" id="2HY6">
    <property type="method" value="X-ray"/>
    <property type="resolution" value="1.25 A"/>
    <property type="chains" value="A/B/C/D/E/F/G=251-281"/>
</dbReference>
<dbReference type="PDB" id="2IPZ">
    <property type="method" value="X-ray"/>
    <property type="resolution" value="1.35 A"/>
    <property type="chains" value="A/B/C/D=251-281"/>
</dbReference>
<dbReference type="PDB" id="2K8X">
    <property type="method" value="NMR"/>
    <property type="chains" value="A/B=264-281"/>
</dbReference>
<dbReference type="PDB" id="2LPB">
    <property type="method" value="NMR"/>
    <property type="chains" value="B=101-134"/>
</dbReference>
<dbReference type="PDB" id="2N9B">
    <property type="method" value="NMR"/>
    <property type="chains" value="A/B=253-280"/>
</dbReference>
<dbReference type="PDB" id="2NRN">
    <property type="method" value="X-ray"/>
    <property type="resolution" value="1.40 A"/>
    <property type="chains" value="A/B/C/D=251-281"/>
</dbReference>
<dbReference type="PDB" id="2O7H">
    <property type="method" value="X-ray"/>
    <property type="resolution" value="1.86 A"/>
    <property type="chains" value="A/B/C/D/E/F=249-281"/>
</dbReference>
<dbReference type="PDB" id="2OVN">
    <property type="method" value="NMR"/>
    <property type="chains" value="A=264-280"/>
</dbReference>
<dbReference type="PDB" id="2VKY">
    <property type="method" value="X-ray"/>
    <property type="resolution" value="2.05 A"/>
    <property type="chains" value="B=256-280"/>
</dbReference>
<dbReference type="PDB" id="2VNL">
    <property type="method" value="X-ray"/>
    <property type="resolution" value="1.80 A"/>
    <property type="chains" value="A=252-280"/>
</dbReference>
<dbReference type="PDB" id="2WG5">
    <property type="method" value="X-ray"/>
    <property type="resolution" value="2.10 A"/>
    <property type="chains" value="A/B/C/D/E/F/G/H/I/J/K/L=249-272"/>
</dbReference>
<dbReference type="PDB" id="2WG6">
    <property type="method" value="X-ray"/>
    <property type="resolution" value="2.50 A"/>
    <property type="chains" value="A/B/C/D/E/F/G/H/I/J/K/L=249-272"/>
</dbReference>
<dbReference type="PDB" id="2WPY">
    <property type="method" value="X-ray"/>
    <property type="resolution" value="1.75 A"/>
    <property type="chains" value="A=249-281"/>
</dbReference>
<dbReference type="PDB" id="2WPZ">
    <property type="method" value="X-ray"/>
    <property type="resolution" value="1.25 A"/>
    <property type="chains" value="A/B/C=249-281"/>
</dbReference>
<dbReference type="PDB" id="2WQ0">
    <property type="method" value="X-ray"/>
    <property type="resolution" value="1.12 A"/>
    <property type="chains" value="A=249-281"/>
</dbReference>
<dbReference type="PDB" id="2WQ1">
    <property type="method" value="X-ray"/>
    <property type="resolution" value="1.08 A"/>
    <property type="chains" value="A=249-281"/>
</dbReference>
<dbReference type="PDB" id="2WQ2">
    <property type="method" value="X-ray"/>
    <property type="resolution" value="1.36 A"/>
    <property type="chains" value="A=249-281"/>
</dbReference>
<dbReference type="PDB" id="2WQ3">
    <property type="method" value="X-ray"/>
    <property type="resolution" value="1.22 A"/>
    <property type="chains" value="A=249-281"/>
</dbReference>
<dbReference type="PDB" id="2YNY">
    <property type="method" value="X-ray"/>
    <property type="resolution" value="1.35 A"/>
    <property type="chains" value="A/B/C=250-278"/>
</dbReference>
<dbReference type="PDB" id="2YNZ">
    <property type="method" value="X-ray"/>
    <property type="resolution" value="1.40 A"/>
    <property type="chains" value="A/B/C=250-278"/>
</dbReference>
<dbReference type="PDB" id="2YO0">
    <property type="method" value="X-ray"/>
    <property type="resolution" value="2.80 A"/>
    <property type="chains" value="A=250-278"/>
</dbReference>
<dbReference type="PDB" id="2YO1">
    <property type="method" value="X-ray"/>
    <property type="resolution" value="3.10 A"/>
    <property type="chains" value="A/B/C=250-278"/>
</dbReference>
<dbReference type="PDB" id="2YO2">
    <property type="method" value="X-ray"/>
    <property type="resolution" value="2.00 A"/>
    <property type="chains" value="A=250-278"/>
</dbReference>
<dbReference type="PDB" id="2YO3">
    <property type="method" value="X-ray"/>
    <property type="resolution" value="2.00 A"/>
    <property type="chains" value="A/B/C=250-278"/>
</dbReference>
<dbReference type="PDB" id="2Z5H">
    <property type="method" value="X-ray"/>
    <property type="resolution" value="2.89 A"/>
    <property type="chains" value="A/B/C/D/E/F/G/H=259-278, I=267-278"/>
</dbReference>
<dbReference type="PDB" id="2Z5I">
    <property type="method" value="X-ray"/>
    <property type="resolution" value="2.10 A"/>
    <property type="chains" value="A/B/C/D/E/F/G/H=259-278, I/J=267-278"/>
</dbReference>
<dbReference type="PDB" id="2ZTA">
    <property type="method" value="X-ray"/>
    <property type="resolution" value="1.80 A"/>
    <property type="chains" value="A/B=249-281"/>
</dbReference>
<dbReference type="PDB" id="3AZD">
    <property type="method" value="X-ray"/>
    <property type="resolution" value="0.98 A"/>
    <property type="chains" value="A/B=264-281"/>
</dbReference>
<dbReference type="PDB" id="3BAS">
    <property type="method" value="X-ray"/>
    <property type="resolution" value="2.30 A"/>
    <property type="chains" value="A/B=250-281"/>
</dbReference>
<dbReference type="PDB" id="3BAT">
    <property type="method" value="X-ray"/>
    <property type="resolution" value="2.30 A"/>
    <property type="chains" value="A/B/C/D=250-281"/>
</dbReference>
<dbReference type="PDB" id="3CK4">
    <property type="method" value="X-ray"/>
    <property type="resolution" value="1.70 A"/>
    <property type="chains" value="A/B/C/D/E/F/G/H/I/J/K/L=251-281"/>
</dbReference>
<dbReference type="PDB" id="3CRP">
    <property type="method" value="X-ray"/>
    <property type="resolution" value="1.70 A"/>
    <property type="chains" value="A/B/C/D/E=251-281"/>
</dbReference>
<dbReference type="PDB" id="3G9R">
    <property type="method" value="X-ray"/>
    <property type="resolution" value="2.00 A"/>
    <property type="chains" value="A/B/C/D/E/F=258-276"/>
</dbReference>
<dbReference type="PDB" id="3GJP">
    <property type="method" value="X-ray"/>
    <property type="resolution" value="2.00 A"/>
    <property type="chains" value="A/B/C=249-281"/>
</dbReference>
<dbReference type="PDB" id="3I1G">
    <property type="method" value="X-ray"/>
    <property type="resolution" value="1.60 A"/>
    <property type="chains" value="A=249-281"/>
</dbReference>
<dbReference type="PDB" id="3I5C">
    <property type="method" value="X-ray"/>
    <property type="resolution" value="1.94 A"/>
    <property type="chains" value="A/B=249-278"/>
</dbReference>
<dbReference type="PDB" id="3K7Z">
    <property type="method" value="X-ray"/>
    <property type="resolution" value="1.90 A"/>
    <property type="chains" value="A/B/C=249-281"/>
</dbReference>
<dbReference type="PDB" id="3M48">
    <property type="method" value="X-ray"/>
    <property type="resolution" value="1.45 A"/>
    <property type="chains" value="A=249-281"/>
</dbReference>
<dbReference type="PDB" id="3P8M">
    <property type="method" value="X-ray"/>
    <property type="resolution" value="2.90 A"/>
    <property type="chains" value="C/D=250-281"/>
</dbReference>
<dbReference type="PDB" id="3ZMF">
    <property type="method" value="X-ray"/>
    <property type="resolution" value="1.85 A"/>
    <property type="chains" value="A/B/C=250-278"/>
</dbReference>
<dbReference type="PDB" id="4C46">
    <property type="method" value="X-ray"/>
    <property type="resolution" value="1.95 A"/>
    <property type="chains" value="A/B/C=250-278"/>
</dbReference>
<dbReference type="PDB" id="4DMD">
    <property type="method" value="X-ray"/>
    <property type="resolution" value="2.00 A"/>
    <property type="chains" value="A/B=249-281"/>
</dbReference>
<dbReference type="PDB" id="4G2K">
    <property type="method" value="X-ray"/>
    <property type="resolution" value="1.90 A"/>
    <property type="chains" value="A/B/C=250-279"/>
</dbReference>
<dbReference type="PDB" id="4HU5">
    <property type="method" value="X-ray"/>
    <property type="resolution" value="2.30 A"/>
    <property type="chains" value="A/B=249-281"/>
</dbReference>
<dbReference type="PDB" id="4HU6">
    <property type="method" value="X-ray"/>
    <property type="resolution" value="2.30 A"/>
    <property type="chains" value="A/B/C/D=260-281"/>
</dbReference>
<dbReference type="PDB" id="4NIZ">
    <property type="method" value="X-ray"/>
    <property type="resolution" value="2.00 A"/>
    <property type="chains" value="A/B=249-281"/>
</dbReference>
<dbReference type="PDB" id="4NJ0">
    <property type="method" value="X-ray"/>
    <property type="resolution" value="1.90 A"/>
    <property type="chains" value="A/B=249-281"/>
</dbReference>
<dbReference type="PDB" id="4NJ1">
    <property type="method" value="X-ray"/>
    <property type="resolution" value="2.00 A"/>
    <property type="chains" value="A/B=249-281"/>
</dbReference>
<dbReference type="PDB" id="4NJ2">
    <property type="method" value="X-ray"/>
    <property type="resolution" value="2.20 A"/>
    <property type="chains" value="A/B=249-281"/>
</dbReference>
<dbReference type="PDB" id="4OWI">
    <property type="method" value="X-ray"/>
    <property type="resolution" value="1.20 A"/>
    <property type="chains" value="A/B=249-278"/>
</dbReference>
<dbReference type="PDB" id="4TL1">
    <property type="method" value="X-ray"/>
    <property type="resolution" value="1.80 A"/>
    <property type="chains" value="A/B=249-281"/>
</dbReference>
<dbReference type="PDB" id="5APP">
    <property type="method" value="X-ray"/>
    <property type="resolution" value="2.30 A"/>
    <property type="chains" value="A/B/C=250-276"/>
</dbReference>
<dbReference type="PDB" id="5APQ">
    <property type="method" value="X-ray"/>
    <property type="resolution" value="2.10 A"/>
    <property type="chains" value="A/B/C=250-281"/>
</dbReference>
<dbReference type="PDB" id="5APS">
    <property type="method" value="X-ray"/>
    <property type="resolution" value="1.37 A"/>
    <property type="chains" value="A=250-281"/>
</dbReference>
<dbReference type="PDB" id="5APT">
    <property type="method" value="X-ray"/>
    <property type="resolution" value="1.80 A"/>
    <property type="chains" value="A/B/C=250-281"/>
</dbReference>
<dbReference type="PDB" id="5APU">
    <property type="method" value="X-ray"/>
    <property type="resolution" value="1.35 A"/>
    <property type="chains" value="A/B/C=250-281"/>
</dbReference>
<dbReference type="PDB" id="5APV">
    <property type="method" value="X-ray"/>
    <property type="resolution" value="2.00 A"/>
    <property type="chains" value="A/B/C/D/E/F=250-281"/>
</dbReference>
<dbReference type="PDB" id="5APW">
    <property type="method" value="X-ray"/>
    <property type="resolution" value="1.60 A"/>
    <property type="chains" value="A/B/C=250-281"/>
</dbReference>
<dbReference type="PDB" id="5APX">
    <property type="method" value="X-ray"/>
    <property type="resolution" value="1.80 A"/>
    <property type="chains" value="A/B/C=250-281"/>
</dbReference>
<dbReference type="PDB" id="5APY">
    <property type="method" value="X-ray"/>
    <property type="resolution" value="2.00 A"/>
    <property type="chains" value="A/B/C=250-281"/>
</dbReference>
<dbReference type="PDB" id="5APZ">
    <property type="method" value="X-ray"/>
    <property type="resolution" value="1.60 A"/>
    <property type="chains" value="A=250-279"/>
</dbReference>
<dbReference type="PDB" id="5IEW">
    <property type="method" value="NMR"/>
    <property type="chains" value="A/B=250-280"/>
</dbReference>
<dbReference type="PDB" id="5IIR">
    <property type="method" value="NMR"/>
    <property type="chains" value="A/B=250-280"/>
</dbReference>
<dbReference type="PDB" id="5IIV">
    <property type="method" value="NMR"/>
    <property type="chains" value="A/B=250-280"/>
</dbReference>
<dbReference type="PDB" id="5KHT">
    <property type="method" value="X-ray"/>
    <property type="resolution" value="1.50 A"/>
    <property type="chains" value="A/B/C/D=264-281"/>
</dbReference>
<dbReference type="PDB" id="6E52">
    <property type="method" value="X-ray"/>
    <property type="resolution" value="1.93 A"/>
    <property type="chains" value="A/B=250-275"/>
</dbReference>
<dbReference type="PDB" id="6E95">
    <property type="method" value="X-ray"/>
    <property type="resolution" value="2.25 A"/>
    <property type="chains" value="A/B=250-275"/>
</dbReference>
<dbReference type="PDB" id="6H9M">
    <property type="method" value="X-ray"/>
    <property type="resolution" value="2.10 A"/>
    <property type="chains" value="A/B/C=251-281"/>
</dbReference>
<dbReference type="PDB" id="6HN4">
    <property type="method" value="EM"/>
    <property type="resolution" value="4.20 A"/>
    <property type="chains" value="E/F=249-281"/>
</dbReference>
<dbReference type="PDB" id="6HN5">
    <property type="method" value="EM"/>
    <property type="resolution" value="3.20 A"/>
    <property type="chains" value="E/F=249-281"/>
</dbReference>
<dbReference type="PDB" id="6O2E">
    <property type="method" value="X-ray"/>
    <property type="resolution" value="1.90 A"/>
    <property type="chains" value="A=249-279"/>
</dbReference>
<dbReference type="PDB" id="6O2F">
    <property type="method" value="X-ray"/>
    <property type="resolution" value="1.80 A"/>
    <property type="chains" value="A=249-279"/>
</dbReference>
<dbReference type="PDB" id="6PSA">
    <property type="method" value="X-ray"/>
    <property type="resolution" value="1.30 A"/>
    <property type="chains" value="A=249-277"/>
</dbReference>
<dbReference type="PDB" id="6UT2">
    <property type="method" value="NMR"/>
    <property type="chains" value="B/C=264-281"/>
</dbReference>
<dbReference type="PDB" id="6VWG">
    <property type="method" value="EM"/>
    <property type="resolution" value="3.21 A"/>
    <property type="chains" value="A/B=249-281"/>
</dbReference>
<dbReference type="PDB" id="6VWH">
    <property type="method" value="EM"/>
    <property type="resolution" value="4.26 A"/>
    <property type="chains" value="A/B=249-281"/>
</dbReference>
<dbReference type="PDB" id="6VWI">
    <property type="method" value="EM"/>
    <property type="resolution" value="3.70 A"/>
    <property type="chains" value="A/B=249-281"/>
</dbReference>
<dbReference type="PDB" id="6VWJ">
    <property type="method" value="EM"/>
    <property type="resolution" value="4.21 A"/>
    <property type="chains" value="A/B=249-281"/>
</dbReference>
<dbReference type="PDB" id="6XNE">
    <property type="method" value="X-ray"/>
    <property type="resolution" value="1.96 A"/>
    <property type="chains" value="A/B/C=249-278"/>
</dbReference>
<dbReference type="PDB" id="6XNF">
    <property type="method" value="X-ray"/>
    <property type="resolution" value="2.00 A"/>
    <property type="chains" value="A/B/C=249-278"/>
</dbReference>
<dbReference type="PDB" id="6XNL">
    <property type="method" value="X-ray"/>
    <property type="resolution" value="2.20 A"/>
    <property type="chains" value="A/B/C=249-278"/>
</dbReference>
<dbReference type="PDB" id="6XNM">
    <property type="method" value="X-ray"/>
    <property type="resolution" value="2.25 A"/>
    <property type="chains" value="A/B/C=249-278"/>
</dbReference>
<dbReference type="PDB" id="7A4T">
    <property type="method" value="X-ray"/>
    <property type="resolution" value="2.12 A"/>
    <property type="chains" value="B/C=252-279"/>
</dbReference>
<dbReference type="PDB" id="7SAF">
    <property type="method" value="X-ray"/>
    <property type="resolution" value="2.45 A"/>
    <property type="chains" value="A/B=250-278"/>
</dbReference>
<dbReference type="PDB" id="7SAY">
    <property type="method" value="X-ray"/>
    <property type="resolution" value="2.10 A"/>
    <property type="chains" value="A/B/C/D=250-278"/>
</dbReference>
<dbReference type="PDBsum" id="1CE9"/>
<dbReference type="PDBsum" id="1DGC"/>
<dbReference type="PDBsum" id="1ENV"/>
<dbReference type="PDBsum" id="1FAV"/>
<dbReference type="PDBsum" id="1FMH"/>
<dbReference type="PDBsum" id="1GCL"/>
<dbReference type="PDBsum" id="1GCM"/>
<dbReference type="PDBsum" id="1GK6"/>
<dbReference type="PDBsum" id="1GZL"/>
<dbReference type="PDBsum" id="1IHQ"/>
<dbReference type="PDBsum" id="1IJ0"/>
<dbReference type="PDBsum" id="1IJ1"/>
<dbReference type="PDBsum" id="1IJ2"/>
<dbReference type="PDBsum" id="1IJ3"/>
<dbReference type="PDBsum" id="1KQL"/>
<dbReference type="PDBsum" id="1LD4"/>
<dbReference type="PDBsum" id="1LLM"/>
<dbReference type="PDBsum" id="1NKN"/>
<dbReference type="PDBsum" id="1PIQ"/>
<dbReference type="PDBsum" id="1RB4"/>
<dbReference type="PDBsum" id="1RB5"/>
<dbReference type="PDBsum" id="1RB6"/>
<dbReference type="PDBsum" id="1SWI"/>
<dbReference type="PDBsum" id="1TMZ"/>
<dbReference type="PDBsum" id="1UNT"/>
<dbReference type="PDBsum" id="1UNU"/>
<dbReference type="PDBsum" id="1UNV"/>
<dbReference type="PDBsum" id="1UNW"/>
<dbReference type="PDBsum" id="1UNX"/>
<dbReference type="PDBsum" id="1UNY"/>
<dbReference type="PDBsum" id="1UNZ"/>
<dbReference type="PDBsum" id="1UO0"/>
<dbReference type="PDBsum" id="1UO1"/>
<dbReference type="PDBsum" id="1UO2"/>
<dbReference type="PDBsum" id="1UO3"/>
<dbReference type="PDBsum" id="1UO4"/>
<dbReference type="PDBsum" id="1UO5"/>
<dbReference type="PDBsum" id="1W5G"/>
<dbReference type="PDBsum" id="1W5H"/>
<dbReference type="PDBsum" id="1W5I"/>
<dbReference type="PDBsum" id="1W5J"/>
<dbReference type="PDBsum" id="1W5K"/>
<dbReference type="PDBsum" id="1W5L"/>
<dbReference type="PDBsum" id="1YSA"/>
<dbReference type="PDBsum" id="1ZII"/>
<dbReference type="PDBsum" id="1ZIJ"/>
<dbReference type="PDBsum" id="1ZIK"/>
<dbReference type="PDBsum" id="1ZIL"/>
<dbReference type="PDBsum" id="1ZIM"/>
<dbReference type="PDBsum" id="1ZTA"/>
<dbReference type="PDBsum" id="2AHP"/>
<dbReference type="PDBsum" id="2B1F"/>
<dbReference type="PDBsum" id="2B22"/>
<dbReference type="PDBsum" id="2BNI"/>
<dbReference type="PDBsum" id="2CCE"/>
<dbReference type="PDBsum" id="2CCF"/>
<dbReference type="PDBsum" id="2CCN"/>
<dbReference type="PDBsum" id="2D3E"/>
<dbReference type="PDBsum" id="2DGC"/>
<dbReference type="PDBsum" id="2EFR"/>
<dbReference type="PDBsum" id="2EFS"/>
<dbReference type="PDBsum" id="2G9J"/>
<dbReference type="PDBsum" id="2HY6"/>
<dbReference type="PDBsum" id="2IPZ"/>
<dbReference type="PDBsum" id="2K8X"/>
<dbReference type="PDBsum" id="2LPB"/>
<dbReference type="PDBsum" id="2N9B"/>
<dbReference type="PDBsum" id="2NRN"/>
<dbReference type="PDBsum" id="2O7H"/>
<dbReference type="PDBsum" id="2OVN"/>
<dbReference type="PDBsum" id="2VKY"/>
<dbReference type="PDBsum" id="2VNL"/>
<dbReference type="PDBsum" id="2WG5"/>
<dbReference type="PDBsum" id="2WG6"/>
<dbReference type="PDBsum" id="2WPY"/>
<dbReference type="PDBsum" id="2WPZ"/>
<dbReference type="PDBsum" id="2WQ0"/>
<dbReference type="PDBsum" id="2WQ1"/>
<dbReference type="PDBsum" id="2WQ2"/>
<dbReference type="PDBsum" id="2WQ3"/>
<dbReference type="PDBsum" id="2YNY"/>
<dbReference type="PDBsum" id="2YNZ"/>
<dbReference type="PDBsum" id="2YO0"/>
<dbReference type="PDBsum" id="2YO1"/>
<dbReference type="PDBsum" id="2YO2"/>
<dbReference type="PDBsum" id="2YO3"/>
<dbReference type="PDBsum" id="2Z5H"/>
<dbReference type="PDBsum" id="2Z5I"/>
<dbReference type="PDBsum" id="2ZTA"/>
<dbReference type="PDBsum" id="3AZD"/>
<dbReference type="PDBsum" id="3BAS"/>
<dbReference type="PDBsum" id="3BAT"/>
<dbReference type="PDBsum" id="3CK4"/>
<dbReference type="PDBsum" id="3CRP"/>
<dbReference type="PDBsum" id="3G9R"/>
<dbReference type="PDBsum" id="3GJP"/>
<dbReference type="PDBsum" id="3I1G"/>
<dbReference type="PDBsum" id="3I5C"/>
<dbReference type="PDBsum" id="3K7Z"/>
<dbReference type="PDBsum" id="3M48"/>
<dbReference type="PDBsum" id="3P8M"/>
<dbReference type="PDBsum" id="3ZMF"/>
<dbReference type="PDBsum" id="4C46"/>
<dbReference type="PDBsum" id="4DMD"/>
<dbReference type="PDBsum" id="4G2K"/>
<dbReference type="PDBsum" id="4HU5"/>
<dbReference type="PDBsum" id="4HU6"/>
<dbReference type="PDBsum" id="4NIZ"/>
<dbReference type="PDBsum" id="4NJ0"/>
<dbReference type="PDBsum" id="4NJ1"/>
<dbReference type="PDBsum" id="4NJ2"/>
<dbReference type="PDBsum" id="4OWI"/>
<dbReference type="PDBsum" id="4TL1"/>
<dbReference type="PDBsum" id="5APP"/>
<dbReference type="PDBsum" id="5APQ"/>
<dbReference type="PDBsum" id="5APS"/>
<dbReference type="PDBsum" id="5APT"/>
<dbReference type="PDBsum" id="5APU"/>
<dbReference type="PDBsum" id="5APV"/>
<dbReference type="PDBsum" id="5APW"/>
<dbReference type="PDBsum" id="5APX"/>
<dbReference type="PDBsum" id="5APY"/>
<dbReference type="PDBsum" id="5APZ"/>
<dbReference type="PDBsum" id="5IEW"/>
<dbReference type="PDBsum" id="5IIR"/>
<dbReference type="PDBsum" id="5IIV"/>
<dbReference type="PDBsum" id="5KHT"/>
<dbReference type="PDBsum" id="6E52"/>
<dbReference type="PDBsum" id="6E95"/>
<dbReference type="PDBsum" id="6H9M"/>
<dbReference type="PDBsum" id="6HN4"/>
<dbReference type="PDBsum" id="6HN5"/>
<dbReference type="PDBsum" id="6O2E"/>
<dbReference type="PDBsum" id="6O2F"/>
<dbReference type="PDBsum" id="6PSA"/>
<dbReference type="PDBsum" id="6UT2"/>
<dbReference type="PDBsum" id="6VWG"/>
<dbReference type="PDBsum" id="6VWH"/>
<dbReference type="PDBsum" id="6VWI"/>
<dbReference type="PDBsum" id="6VWJ"/>
<dbReference type="PDBsum" id="6XNE"/>
<dbReference type="PDBsum" id="6XNF"/>
<dbReference type="PDBsum" id="6XNL"/>
<dbReference type="PDBsum" id="6XNM"/>
<dbReference type="PDBsum" id="7A4T"/>
<dbReference type="PDBsum" id="7SAF"/>
<dbReference type="PDBsum" id="7SAY"/>
<dbReference type="BMRB" id="P03069"/>
<dbReference type="EMDB" id="EMD-0246"/>
<dbReference type="EMDB" id="EMD-0247"/>
<dbReference type="EMDB" id="EMD-17076"/>
<dbReference type="EMDB" id="EMD-17077"/>
<dbReference type="EMDB" id="EMD-17078"/>
<dbReference type="EMDB" id="EMD-21415"/>
<dbReference type="EMDB" id="EMD-21416"/>
<dbReference type="EMDB" id="EMD-21417"/>
<dbReference type="EMDB" id="EMD-21418"/>
<dbReference type="SMR" id="P03069"/>
<dbReference type="BioGRID" id="36723">
    <property type="interactions" value="297"/>
</dbReference>
<dbReference type="DIP" id="DIP-591N"/>
<dbReference type="FunCoup" id="P03069">
    <property type="interactions" value="5544"/>
</dbReference>
<dbReference type="IntAct" id="P03069">
    <property type="interactions" value="18"/>
</dbReference>
<dbReference type="MINT" id="P03069"/>
<dbReference type="STRING" id="4932.YEL009C"/>
<dbReference type="MoonProt" id="P03069"/>
<dbReference type="iPTMnet" id="P03069"/>
<dbReference type="PaxDb" id="4932-YEL009C"/>
<dbReference type="PeptideAtlas" id="P03069"/>
<dbReference type="ABCD" id="P03069">
    <property type="antibodies" value="3 sequenced antibodies"/>
</dbReference>
<dbReference type="EnsemblFungi" id="YEL009C_mRNA">
    <property type="protein sequence ID" value="YEL009C"/>
    <property type="gene ID" value="YEL009C"/>
</dbReference>
<dbReference type="GeneID" id="856709"/>
<dbReference type="KEGG" id="sce:YEL009C"/>
<dbReference type="AGR" id="SGD:S000000735"/>
<dbReference type="SGD" id="S000000735">
    <property type="gene designation" value="GCN4"/>
</dbReference>
<dbReference type="VEuPathDB" id="FungiDB:YEL009C"/>
<dbReference type="eggNOG" id="KOG0837">
    <property type="taxonomic scope" value="Eukaryota"/>
</dbReference>
<dbReference type="HOGENOM" id="CLU_068501_1_0_1"/>
<dbReference type="InParanoid" id="P03069"/>
<dbReference type="OMA" id="PMFEYEN"/>
<dbReference type="OrthoDB" id="5419235at2759"/>
<dbReference type="BioCyc" id="YEAST:G3O-30137-MONOMER"/>
<dbReference type="Reactome" id="R-SCE-2559580">
    <property type="pathway name" value="Oxidative Stress Induced Senescence"/>
</dbReference>
<dbReference type="Reactome" id="R-SCE-2871796">
    <property type="pathway name" value="FCERI mediated MAPK activation"/>
</dbReference>
<dbReference type="Reactome" id="R-SCE-450341">
    <property type="pathway name" value="Activation of the AP-1 family of transcription factors"/>
</dbReference>
<dbReference type="BioGRID-ORCS" id="856709">
    <property type="hits" value="1 hit in 13 CRISPR screens"/>
</dbReference>
<dbReference type="CD-CODE" id="3BAE19B2">
    <property type="entry name" value="Synthetic Condensate 000201"/>
</dbReference>
<dbReference type="CD-CODE" id="BE14A044">
    <property type="entry name" value="Transcriptional condensate"/>
</dbReference>
<dbReference type="CD-CODE" id="E95823B6">
    <property type="entry name" value="Synthetic Condensate 000194"/>
</dbReference>
<dbReference type="EvolutionaryTrace" id="P03069"/>
<dbReference type="PRO" id="PR:P03069"/>
<dbReference type="Proteomes" id="UP000002311">
    <property type="component" value="Chromosome V"/>
</dbReference>
<dbReference type="RNAct" id="P03069">
    <property type="molecule type" value="protein"/>
</dbReference>
<dbReference type="GO" id="GO:0005634">
    <property type="term" value="C:nucleus"/>
    <property type="evidence" value="ECO:0000314"/>
    <property type="project" value="SGD"/>
</dbReference>
<dbReference type="GO" id="GO:0090575">
    <property type="term" value="C:RNA polymerase II transcription regulator complex"/>
    <property type="evidence" value="ECO:0000305"/>
    <property type="project" value="UniProtKB"/>
</dbReference>
<dbReference type="GO" id="GO:0005667">
    <property type="term" value="C:transcription regulator complex"/>
    <property type="evidence" value="ECO:0000318"/>
    <property type="project" value="GO_Central"/>
</dbReference>
<dbReference type="GO" id="GO:0003682">
    <property type="term" value="F:chromatin binding"/>
    <property type="evidence" value="ECO:0000314"/>
    <property type="project" value="SGD"/>
</dbReference>
<dbReference type="GO" id="GO:0001228">
    <property type="term" value="F:DNA-binding transcription activator activity, RNA polymerase II-specific"/>
    <property type="evidence" value="ECO:0000314"/>
    <property type="project" value="UniProtKB"/>
</dbReference>
<dbReference type="GO" id="GO:0003700">
    <property type="term" value="F:DNA-binding transcription factor activity"/>
    <property type="evidence" value="ECO:0000314"/>
    <property type="project" value="SGD"/>
</dbReference>
<dbReference type="GO" id="GO:0000981">
    <property type="term" value="F:DNA-binding transcription factor activity, RNA polymerase II-specific"/>
    <property type="evidence" value="ECO:0000318"/>
    <property type="project" value="GO_Central"/>
</dbReference>
<dbReference type="GO" id="GO:0042802">
    <property type="term" value="F:identical protein binding"/>
    <property type="evidence" value="ECO:0000353"/>
    <property type="project" value="IntAct"/>
</dbReference>
<dbReference type="GO" id="GO:0036033">
    <property type="term" value="F:mediator complex binding"/>
    <property type="evidence" value="ECO:0000353"/>
    <property type="project" value="DisProt"/>
</dbReference>
<dbReference type="GO" id="GO:0000978">
    <property type="term" value="F:RNA polymerase II cis-regulatory region sequence-specific DNA binding"/>
    <property type="evidence" value="ECO:0000314"/>
    <property type="project" value="UniProtKB"/>
</dbReference>
<dbReference type="GO" id="GO:0061629">
    <property type="term" value="F:RNA polymerase II-specific DNA-binding transcription factor binding"/>
    <property type="evidence" value="ECO:0000353"/>
    <property type="project" value="SGD"/>
</dbReference>
<dbReference type="GO" id="GO:0043565">
    <property type="term" value="F:sequence-specific DNA binding"/>
    <property type="evidence" value="ECO:0000314"/>
    <property type="project" value="UniProtKB"/>
</dbReference>
<dbReference type="GO" id="GO:0001094">
    <property type="term" value="F:TFIID-class transcription factor complex binding"/>
    <property type="evidence" value="ECO:0000269"/>
    <property type="project" value="DisProt"/>
</dbReference>
<dbReference type="GO" id="GO:0008652">
    <property type="term" value="P:amino acid biosynthetic process"/>
    <property type="evidence" value="ECO:0007669"/>
    <property type="project" value="UniProtKB-KW"/>
</dbReference>
<dbReference type="GO" id="GO:0034198">
    <property type="term" value="P:cellular response to amino acid starvation"/>
    <property type="evidence" value="ECO:0000315"/>
    <property type="project" value="UniProtKB"/>
</dbReference>
<dbReference type="GO" id="GO:0031669">
    <property type="term" value="P:cellular response to nutrient levels"/>
    <property type="evidence" value="ECO:0000315"/>
    <property type="project" value="SGD"/>
</dbReference>
<dbReference type="GO" id="GO:0035556">
    <property type="term" value="P:intracellular signal transduction"/>
    <property type="evidence" value="ECO:0000315"/>
    <property type="project" value="UniProtKB"/>
</dbReference>
<dbReference type="GO" id="GO:0010688">
    <property type="term" value="P:negative regulation of ribosomal protein gene transcription by RNA polymerase II"/>
    <property type="evidence" value="ECO:0000315"/>
    <property type="project" value="SGD"/>
</dbReference>
<dbReference type="GO" id="GO:0000122">
    <property type="term" value="P:negative regulation of transcription by RNA polymerase II"/>
    <property type="evidence" value="ECO:0000315"/>
    <property type="project" value="SGD"/>
</dbReference>
<dbReference type="GO" id="GO:1903833">
    <property type="term" value="P:positive regulation of cellular response to amino acid starvation"/>
    <property type="evidence" value="ECO:0000315"/>
    <property type="project" value="SGD"/>
</dbReference>
<dbReference type="GO" id="GO:0045899">
    <property type="term" value="P:positive regulation of RNA polymerase II transcription preinitiation complex assembly"/>
    <property type="evidence" value="ECO:0000314"/>
    <property type="project" value="SGD"/>
</dbReference>
<dbReference type="GO" id="GO:0045944">
    <property type="term" value="P:positive regulation of transcription by RNA polymerase II"/>
    <property type="evidence" value="ECO:0000314"/>
    <property type="project" value="UniProtKB"/>
</dbReference>
<dbReference type="GO" id="GO:0060261">
    <property type="term" value="P:positive regulation of transcription initiation by RNA polymerase II"/>
    <property type="evidence" value="ECO:0000315"/>
    <property type="project" value="SGD"/>
</dbReference>
<dbReference type="GO" id="GO:1990139">
    <property type="term" value="P:protein localization to nuclear periphery"/>
    <property type="evidence" value="ECO:0000315"/>
    <property type="project" value="SGD"/>
</dbReference>
<dbReference type="GO" id="GO:1990928">
    <property type="term" value="P:response to amino acid starvation"/>
    <property type="evidence" value="ECO:0000315"/>
    <property type="project" value="UniProtKB"/>
</dbReference>
<dbReference type="CDD" id="cd12193">
    <property type="entry name" value="bZIP_GCN4"/>
    <property type="match status" value="1"/>
</dbReference>
<dbReference type="CDD" id="cd12192">
    <property type="entry name" value="GCN4_cent"/>
    <property type="match status" value="1"/>
</dbReference>
<dbReference type="DisProt" id="DP00083"/>
<dbReference type="FunFam" id="3.30.160.60:FF:001491">
    <property type="entry name" value="Cross-pathway control protein A"/>
    <property type="match status" value="1"/>
</dbReference>
<dbReference type="Gene3D" id="3.30.160.60">
    <property type="entry name" value="Classic Zinc Finger"/>
    <property type="match status" value="1"/>
</dbReference>
<dbReference type="InterPro" id="IPR050946">
    <property type="entry name" value="AP-1_TF_bZIP"/>
</dbReference>
<dbReference type="InterPro" id="IPR004827">
    <property type="entry name" value="bZIP"/>
</dbReference>
<dbReference type="InterPro" id="IPR046347">
    <property type="entry name" value="bZIP_sf"/>
</dbReference>
<dbReference type="PANTHER" id="PTHR11462">
    <property type="entry name" value="JUN TRANSCRIPTION FACTOR-RELATED"/>
    <property type="match status" value="1"/>
</dbReference>
<dbReference type="PANTHER" id="PTHR11462:SF35">
    <property type="entry name" value="TRANSCRIPTION FACTOR JRA"/>
    <property type="match status" value="1"/>
</dbReference>
<dbReference type="Pfam" id="PF07716">
    <property type="entry name" value="bZIP_2"/>
    <property type="match status" value="1"/>
</dbReference>
<dbReference type="SMART" id="SM00338">
    <property type="entry name" value="BRLZ"/>
    <property type="match status" value="1"/>
</dbReference>
<dbReference type="SUPFAM" id="SSF57959">
    <property type="entry name" value="Leucine zipper domain"/>
    <property type="match status" value="1"/>
</dbReference>
<dbReference type="PROSITE" id="PS50217">
    <property type="entry name" value="BZIP"/>
    <property type="match status" value="1"/>
</dbReference>
<dbReference type="PROSITE" id="PS00036">
    <property type="entry name" value="BZIP_BASIC"/>
    <property type="match status" value="1"/>
</dbReference>
<keyword id="KW-0002">3D-structure</keyword>
<keyword id="KW-0010">Activator</keyword>
<keyword id="KW-0028">Amino-acid biosynthesis</keyword>
<keyword id="KW-0238">DNA-binding</keyword>
<keyword id="KW-0539">Nucleus</keyword>
<keyword id="KW-0597">Phosphoprotein</keyword>
<keyword id="KW-1185">Reference proteome</keyword>
<keyword id="KW-0804">Transcription</keyword>
<keyword id="KW-0805">Transcription regulation</keyword>
<protein>
    <recommendedName>
        <fullName>General control transcription factor GCN4</fullName>
    </recommendedName>
    <alternativeName>
        <fullName>Amino acid biosynthesis regulatory protein</fullName>
    </alternativeName>
    <alternativeName>
        <fullName>General control protein GCN4</fullName>
    </alternativeName>
</protein>